<feature type="chain" id="PRO_0000065753" description="18 kDa protein">
    <location>
        <begin position="1"/>
        <end position="163"/>
    </location>
</feature>
<organismHost>
    <name type="scientific">Mus musculus</name>
    <name type="common">Mouse</name>
    <dbReference type="NCBI Taxonomy" id="10090"/>
</organismHost>
<name>V18K_MLVAB</name>
<proteinExistence type="predicted"/>
<dbReference type="EMBL" id="V01541">
    <property type="protein sequence ID" value="CAA24782.1"/>
    <property type="molecule type" value="Genomic_DNA"/>
</dbReference>
<dbReference type="PIR" id="A04001">
    <property type="entry name" value="WMVW8M"/>
</dbReference>
<dbReference type="RefSeq" id="NP_598369.1">
    <property type="nucleotide sequence ID" value="NC_001499.1"/>
</dbReference>
<reference key="1">
    <citation type="journal article" date="1983" name="Proc. Natl. Acad. Sci. U.S.A.">
        <title>Nucleotide sequence of Abelson murine leukemia virus genome: structural similarity of its transforming gene product to other onc gene products with tyrosine-specific kinase activity.</title>
        <authorList>
            <person name="Reddy E.P."/>
            <person name="Smith M.J."/>
            <person name="Srinivasan A."/>
        </authorList>
    </citation>
    <scope>NUCLEOTIDE SEQUENCE [GENOMIC DNA]</scope>
</reference>
<sequence length="163" mass="17090">MEPGGVGSSSCVVHQLPCTFPAQPRRQPPLLTACGWVSCSEDYIWPAWPPGFSLPGASDPAPRSAWSALPCPCRTTSSDGPSCHQGMGAPVLTVPAPLMLTNCPREPVLTVFSLEGSCRFKGHEVLKPGAQMGGHWKQELGSVVCHLLSVSSAVCPADLGQQA</sequence>
<organism>
    <name type="scientific">Abelson murine leukemia virus</name>
    <dbReference type="NCBI Taxonomy" id="11788"/>
    <lineage>
        <taxon>Viruses</taxon>
        <taxon>Riboviria</taxon>
        <taxon>Pararnavirae</taxon>
        <taxon>Artverviricota</taxon>
        <taxon>Revtraviricetes</taxon>
        <taxon>Ortervirales</taxon>
        <taxon>Retroviridae</taxon>
        <taxon>Orthoretrovirinae</taxon>
        <taxon>Gammaretrovirus</taxon>
    </lineage>
</organism>
<protein>
    <recommendedName>
        <fullName>18 kDa protein</fullName>
    </recommendedName>
</protein>
<accession>P03400</accession>